<organism>
    <name type="scientific">Acholeplasma laidlawii</name>
    <dbReference type="NCBI Taxonomy" id="2148"/>
    <lineage>
        <taxon>Bacteria</taxon>
        <taxon>Bacillati</taxon>
        <taxon>Mycoplasmatota</taxon>
        <taxon>Mollicutes</taxon>
        <taxon>Acholeplasmatales</taxon>
        <taxon>Acholeplasmataceae</taxon>
        <taxon>Acholeplasma</taxon>
    </lineage>
</organism>
<sequence>DQNGKVVNEKMEPKLPKETLLKMYKTAVLGRNADIKALQYQRQGRMLTYAPNMGQEAAQIGMAAAMEPQDWNSPMYRELNTLLYRGDKLENVFLYWYGNERGSIKPEGVKILPTNIIIGSQSNIAAGLAMASKIRKTNEVTAFTIGDGGTAHGEFYEGLNFAASFKAPVVAVIQNNQWAISTPVRKASNSETLAQKGVAFGIPYIQVDGNDMLAMYVASKEAMDRARKGDGPTLIEAFTYRMGPHTTSDDPCSIYRTKEEENEWAKKDQIARFKTYLINKGYWSEEEDKKLEEEVLAEINDTFKKVESYGANVELIEIFEHTYAEMTPQLKEQYEEHKKYLEGVK</sequence>
<keyword id="KW-0560">Oxidoreductase</keyword>
<keyword id="KW-0670">Pyruvate</keyword>
<keyword id="KW-0786">Thiamine pyrophosphate</keyword>
<dbReference type="EC" id="1.2.4.1"/>
<dbReference type="EMBL" id="M81753">
    <property type="protein sequence ID" value="AAA21907.1"/>
    <property type="molecule type" value="Genomic_DNA"/>
</dbReference>
<dbReference type="PIR" id="A42653">
    <property type="entry name" value="A42653"/>
</dbReference>
<dbReference type="SMR" id="P35485"/>
<dbReference type="GO" id="GO:0004739">
    <property type="term" value="F:pyruvate dehydrogenase (acetyl-transferring) activity"/>
    <property type="evidence" value="ECO:0007669"/>
    <property type="project" value="UniProtKB-EC"/>
</dbReference>
<dbReference type="GO" id="GO:0009083">
    <property type="term" value="P:branched-chain amino acid catabolic process"/>
    <property type="evidence" value="ECO:0007669"/>
    <property type="project" value="TreeGrafter"/>
</dbReference>
<dbReference type="CDD" id="cd02000">
    <property type="entry name" value="TPP_E1_PDC_ADC_BCADC"/>
    <property type="match status" value="1"/>
</dbReference>
<dbReference type="Gene3D" id="3.40.50.970">
    <property type="match status" value="1"/>
</dbReference>
<dbReference type="InterPro" id="IPR050771">
    <property type="entry name" value="Alpha-ketoacid_DH_E1_comp"/>
</dbReference>
<dbReference type="InterPro" id="IPR001017">
    <property type="entry name" value="DH_E1"/>
</dbReference>
<dbReference type="InterPro" id="IPR017596">
    <property type="entry name" value="PdhA/BkdA"/>
</dbReference>
<dbReference type="InterPro" id="IPR029061">
    <property type="entry name" value="THDP-binding"/>
</dbReference>
<dbReference type="NCBIfam" id="TIGR03181">
    <property type="entry name" value="PDH_E1_alph_x"/>
    <property type="match status" value="1"/>
</dbReference>
<dbReference type="PANTHER" id="PTHR43380">
    <property type="entry name" value="2-OXOISOVALERATE DEHYDROGENASE SUBUNIT ALPHA, MITOCHONDRIAL"/>
    <property type="match status" value="1"/>
</dbReference>
<dbReference type="PANTHER" id="PTHR43380:SF1">
    <property type="entry name" value="2-OXOISOVALERATE DEHYDROGENASE SUBUNIT ALPHA, MITOCHONDRIAL"/>
    <property type="match status" value="1"/>
</dbReference>
<dbReference type="Pfam" id="PF00676">
    <property type="entry name" value="E1_dh"/>
    <property type="match status" value="1"/>
</dbReference>
<dbReference type="SUPFAM" id="SSF52518">
    <property type="entry name" value="Thiamin diphosphate-binding fold (THDP-binding)"/>
    <property type="match status" value="1"/>
</dbReference>
<reference key="1">
    <citation type="journal article" date="1992" name="J. Bacteriol.">
        <title>Identification and analysis of the genes coding for the putative pyruvate dehydrogenase enzyme complex in Acholeplasma laidlawii.</title>
        <authorList>
            <person name="Wallbrandt P."/>
            <person name="Tegman V."/>
            <person name="Jonsson B.-H."/>
            <person name="Wieslander A."/>
        </authorList>
    </citation>
    <scope>NUCLEOTIDE SEQUENCE [GENOMIC DNA]</scope>
</reference>
<comment type="function">
    <text>The pyruvate dehydrogenase complex catalyzes the overall conversion of pyruvate to acetyl-CoA and CO(2). It contains multiple copies of three enzymatic components: pyruvate dehydrogenase (E1), dihydrolipoamide acetyltransferase (E2) and lipoamide dehydrogenase (E3).</text>
</comment>
<comment type="catalytic activity">
    <reaction>
        <text>N(6)-[(R)-lipoyl]-L-lysyl-[protein] + pyruvate + H(+) = N(6)-[(R)-S(8)-acetyldihydrolipoyl]-L-lysyl-[protein] + CO2</text>
        <dbReference type="Rhea" id="RHEA:19189"/>
        <dbReference type="Rhea" id="RHEA-COMP:10474"/>
        <dbReference type="Rhea" id="RHEA-COMP:10478"/>
        <dbReference type="ChEBI" id="CHEBI:15361"/>
        <dbReference type="ChEBI" id="CHEBI:15378"/>
        <dbReference type="ChEBI" id="CHEBI:16526"/>
        <dbReference type="ChEBI" id="CHEBI:83099"/>
        <dbReference type="ChEBI" id="CHEBI:83111"/>
        <dbReference type="EC" id="1.2.4.1"/>
    </reaction>
</comment>
<comment type="cofactor">
    <cofactor>
        <name>thiamine diphosphate</name>
        <dbReference type="ChEBI" id="CHEBI:58937"/>
    </cofactor>
</comment>
<comment type="subunit">
    <text>Heterodimer of an alpha and a beta chain.</text>
</comment>
<protein>
    <recommendedName>
        <fullName>Pyruvate dehydrogenase E1 component subunit alpha</fullName>
        <ecNumber>1.2.4.1</ecNumber>
    </recommendedName>
</protein>
<gene>
    <name type="primary">pdhA</name>
</gene>
<accession>P35485</accession>
<proteinExistence type="predicted"/>
<name>ODPA_ACHLA</name>
<feature type="chain" id="PRO_0000162197" description="Pyruvate dehydrogenase E1 component subunit alpha">
    <location>
        <begin position="1" status="less than"/>
        <end position="345"/>
    </location>
</feature>
<feature type="non-terminal residue">
    <location>
        <position position="1"/>
    </location>
</feature>